<protein>
    <recommendedName>
        <fullName>Uncharacterized tRNA/rRNA methyltransferase AF_2399</fullName>
        <ecNumber>2.1.1.-</ecNumber>
    </recommendedName>
</protein>
<evidence type="ECO:0000250" key="1"/>
<evidence type="ECO:0000305" key="2"/>
<sequence>MRLTDVNSIKEALLEGKVVRIYHSGERNPKISEILEIARKKGVPIYRKDGERFSAEVSPIKYADFEFIVKKALTGGSFILFLDNVVDQRNIGACIRTAEFFGAAGVVLPKRRVGSIQEGAVKASAGAVFHIPIARVENFASAIKKLKKLGFTTLAADLDGEDLEAVSLLLPAAVVIGGEDRGVSRPVKKQCDFVVKIPGVGKVNSLNLSVAAGIFLYTLSRQKY</sequence>
<comment type="similarity">
    <text evidence="2">Belongs to the class IV-like SAM-binding methyltransferase superfamily. RNA methyltransferase TrmH family.</text>
</comment>
<proteinExistence type="inferred from homology"/>
<gene>
    <name type="ordered locus">AF_2399</name>
</gene>
<organism>
    <name type="scientific">Archaeoglobus fulgidus (strain ATCC 49558 / DSM 4304 / JCM 9628 / NBRC 100126 / VC-16)</name>
    <dbReference type="NCBI Taxonomy" id="224325"/>
    <lineage>
        <taxon>Archaea</taxon>
        <taxon>Methanobacteriati</taxon>
        <taxon>Methanobacteriota</taxon>
        <taxon>Archaeoglobi</taxon>
        <taxon>Archaeoglobales</taxon>
        <taxon>Archaeoglobaceae</taxon>
        <taxon>Archaeoglobus</taxon>
    </lineage>
</organism>
<dbReference type="EC" id="2.1.1.-"/>
<dbReference type="EMBL" id="AE000782">
    <property type="protein sequence ID" value="AAB91264.1"/>
    <property type="molecule type" value="Genomic_DNA"/>
</dbReference>
<dbReference type="PIR" id="H69549">
    <property type="entry name" value="H69549"/>
</dbReference>
<dbReference type="SMR" id="O30272"/>
<dbReference type="STRING" id="224325.AF_2399"/>
<dbReference type="PaxDb" id="224325-AF_2399"/>
<dbReference type="EnsemblBacteria" id="AAB91264">
    <property type="protein sequence ID" value="AAB91264"/>
    <property type="gene ID" value="AF_2399"/>
</dbReference>
<dbReference type="KEGG" id="afu:AF_2399"/>
<dbReference type="eggNOG" id="arCOG01018">
    <property type="taxonomic scope" value="Archaea"/>
</dbReference>
<dbReference type="HOGENOM" id="CLU_021322_0_1_2"/>
<dbReference type="OrthoDB" id="50169at2157"/>
<dbReference type="PhylomeDB" id="O30272"/>
<dbReference type="Proteomes" id="UP000002199">
    <property type="component" value="Chromosome"/>
</dbReference>
<dbReference type="GO" id="GO:0005829">
    <property type="term" value="C:cytosol"/>
    <property type="evidence" value="ECO:0007669"/>
    <property type="project" value="TreeGrafter"/>
</dbReference>
<dbReference type="GO" id="GO:0003723">
    <property type="term" value="F:RNA binding"/>
    <property type="evidence" value="ECO:0007669"/>
    <property type="project" value="InterPro"/>
</dbReference>
<dbReference type="GO" id="GO:0008173">
    <property type="term" value="F:RNA methyltransferase activity"/>
    <property type="evidence" value="ECO:0007669"/>
    <property type="project" value="InterPro"/>
</dbReference>
<dbReference type="GO" id="GO:0032259">
    <property type="term" value="P:methylation"/>
    <property type="evidence" value="ECO:0007669"/>
    <property type="project" value="UniProtKB-KW"/>
</dbReference>
<dbReference type="GO" id="GO:0006396">
    <property type="term" value="P:RNA processing"/>
    <property type="evidence" value="ECO:0007669"/>
    <property type="project" value="InterPro"/>
</dbReference>
<dbReference type="CDD" id="cd18103">
    <property type="entry name" value="SpoU-like_RlmB"/>
    <property type="match status" value="1"/>
</dbReference>
<dbReference type="Gene3D" id="3.40.1280.10">
    <property type="match status" value="1"/>
</dbReference>
<dbReference type="InterPro" id="IPR029028">
    <property type="entry name" value="Alpha/beta_knot_MTases"/>
</dbReference>
<dbReference type="InterPro" id="IPR004441">
    <property type="entry name" value="rRNA_MeTrfase_TrmH"/>
</dbReference>
<dbReference type="InterPro" id="IPR001537">
    <property type="entry name" value="SpoU_MeTrfase"/>
</dbReference>
<dbReference type="InterPro" id="IPR029026">
    <property type="entry name" value="tRNA_m1G_MTases_N"/>
</dbReference>
<dbReference type="NCBIfam" id="TIGR00186">
    <property type="entry name" value="rRNA_methyl_3"/>
    <property type="match status" value="1"/>
</dbReference>
<dbReference type="PANTHER" id="PTHR46429">
    <property type="entry name" value="23S RRNA (GUANOSINE-2'-O-)-METHYLTRANSFERASE RLMB"/>
    <property type="match status" value="1"/>
</dbReference>
<dbReference type="PANTHER" id="PTHR46429:SF1">
    <property type="entry name" value="23S RRNA (GUANOSINE-2'-O-)-METHYLTRANSFERASE RLMB"/>
    <property type="match status" value="1"/>
</dbReference>
<dbReference type="Pfam" id="PF00588">
    <property type="entry name" value="SpoU_methylase"/>
    <property type="match status" value="1"/>
</dbReference>
<dbReference type="SUPFAM" id="SSF75217">
    <property type="entry name" value="alpha/beta knot"/>
    <property type="match status" value="1"/>
</dbReference>
<reference key="1">
    <citation type="journal article" date="1997" name="Nature">
        <title>The complete genome sequence of the hyperthermophilic, sulphate-reducing archaeon Archaeoglobus fulgidus.</title>
        <authorList>
            <person name="Klenk H.-P."/>
            <person name="Clayton R.A."/>
            <person name="Tomb J.-F."/>
            <person name="White O."/>
            <person name="Nelson K.E."/>
            <person name="Ketchum K.A."/>
            <person name="Dodson R.J."/>
            <person name="Gwinn M.L."/>
            <person name="Hickey E.K."/>
            <person name="Peterson J.D."/>
            <person name="Richardson D.L."/>
            <person name="Kerlavage A.R."/>
            <person name="Graham D.E."/>
            <person name="Kyrpides N.C."/>
            <person name="Fleischmann R.D."/>
            <person name="Quackenbush J."/>
            <person name="Lee N.H."/>
            <person name="Sutton G.G."/>
            <person name="Gill S.R."/>
            <person name="Kirkness E.F."/>
            <person name="Dougherty B.A."/>
            <person name="McKenney K."/>
            <person name="Adams M.D."/>
            <person name="Loftus B.J."/>
            <person name="Peterson S.N."/>
            <person name="Reich C.I."/>
            <person name="McNeil L.K."/>
            <person name="Badger J.H."/>
            <person name="Glodek A."/>
            <person name="Zhou L."/>
            <person name="Overbeek R."/>
            <person name="Gocayne J.D."/>
            <person name="Weidman J.F."/>
            <person name="McDonald L.A."/>
            <person name="Utterback T.R."/>
            <person name="Cotton M.D."/>
            <person name="Spriggs T."/>
            <person name="Artiach P."/>
            <person name="Kaine B.P."/>
            <person name="Sykes S.M."/>
            <person name="Sadow P.W."/>
            <person name="D'Andrea K.P."/>
            <person name="Bowman C."/>
            <person name="Fujii C."/>
            <person name="Garland S.A."/>
            <person name="Mason T.M."/>
            <person name="Olsen G.J."/>
            <person name="Fraser C.M."/>
            <person name="Smith H.O."/>
            <person name="Woese C.R."/>
            <person name="Venter J.C."/>
        </authorList>
    </citation>
    <scope>NUCLEOTIDE SEQUENCE [LARGE SCALE GENOMIC DNA]</scope>
    <source>
        <strain>ATCC 49558 / DSM 4304 / JCM 9628 / NBRC 100126 / VC-16</strain>
    </source>
</reference>
<name>Y2399_ARCFU</name>
<feature type="chain" id="PRO_0000159842" description="Uncharacterized tRNA/rRNA methyltransferase AF_2399">
    <location>
        <begin position="1"/>
        <end position="224"/>
    </location>
</feature>
<feature type="binding site" evidence="1">
    <location>
        <position position="177"/>
    </location>
    <ligand>
        <name>S-adenosyl-L-methionine</name>
        <dbReference type="ChEBI" id="CHEBI:59789"/>
    </ligand>
</feature>
<feature type="binding site" evidence="1">
    <location>
        <position position="197"/>
    </location>
    <ligand>
        <name>S-adenosyl-L-methionine</name>
        <dbReference type="ChEBI" id="CHEBI:59789"/>
    </ligand>
</feature>
<feature type="binding site" evidence="1">
    <location>
        <position position="206"/>
    </location>
    <ligand>
        <name>S-adenosyl-L-methionine</name>
        <dbReference type="ChEBI" id="CHEBI:59789"/>
    </ligand>
</feature>
<accession>O30272</accession>
<keyword id="KW-0489">Methyltransferase</keyword>
<keyword id="KW-1185">Reference proteome</keyword>
<keyword id="KW-0808">Transferase</keyword>